<proteinExistence type="inferred from homology"/>
<feature type="chain" id="PRO_1000005619" description="Large ribosomal subunit protein uL10">
    <location>
        <begin position="1"/>
        <end position="165"/>
    </location>
</feature>
<comment type="function">
    <text evidence="1">Forms part of the ribosomal stalk, playing a central role in the interaction of the ribosome with GTP-bound translation factors.</text>
</comment>
<comment type="subunit">
    <text evidence="1">Part of the ribosomal stalk of the 50S ribosomal subunit. The N-terminus interacts with L11 and the large rRNA to form the base of the stalk. The C-terminus forms an elongated spine to which L12 dimers bind in a sequential fashion forming a multimeric L10(L12)X complex.</text>
</comment>
<comment type="similarity">
    <text evidence="1">Belongs to the universal ribosomal protein uL10 family.</text>
</comment>
<sequence>MALNLQGKQAIVAEVKEVAKGALSAVVADSRGVTVDKMTELRRAGREAGVHMQVVRNTLLRRIVEGTPFECLKDTFVGPTLIAFSAEHPGAAARLFKAFAKDNAKFEVKAAAFEGELIPAAQIDRLATLPTYEEAIARLMGTMKEAAAGKLVRTLAALRDQKEAA</sequence>
<dbReference type="EMBL" id="CP000308">
    <property type="protein sequence ID" value="ABG15583.1"/>
    <property type="molecule type" value="Genomic_DNA"/>
</dbReference>
<dbReference type="RefSeq" id="WP_002210674.1">
    <property type="nucleotide sequence ID" value="NZ_CP009906.1"/>
</dbReference>
<dbReference type="GeneID" id="96663774"/>
<dbReference type="KEGG" id="ypa:YPA_3621"/>
<dbReference type="Proteomes" id="UP000001971">
    <property type="component" value="Chromosome"/>
</dbReference>
<dbReference type="GO" id="GO:0015934">
    <property type="term" value="C:large ribosomal subunit"/>
    <property type="evidence" value="ECO:0007669"/>
    <property type="project" value="InterPro"/>
</dbReference>
<dbReference type="GO" id="GO:0070180">
    <property type="term" value="F:large ribosomal subunit rRNA binding"/>
    <property type="evidence" value="ECO:0007669"/>
    <property type="project" value="UniProtKB-UniRule"/>
</dbReference>
<dbReference type="GO" id="GO:0003735">
    <property type="term" value="F:structural constituent of ribosome"/>
    <property type="evidence" value="ECO:0007669"/>
    <property type="project" value="InterPro"/>
</dbReference>
<dbReference type="GO" id="GO:0006412">
    <property type="term" value="P:translation"/>
    <property type="evidence" value="ECO:0007669"/>
    <property type="project" value="UniProtKB-UniRule"/>
</dbReference>
<dbReference type="CDD" id="cd05797">
    <property type="entry name" value="Ribosomal_L10"/>
    <property type="match status" value="1"/>
</dbReference>
<dbReference type="FunFam" id="3.30.70.1730:FF:000001">
    <property type="entry name" value="50S ribosomal protein L10"/>
    <property type="match status" value="1"/>
</dbReference>
<dbReference type="Gene3D" id="3.30.70.1730">
    <property type="match status" value="1"/>
</dbReference>
<dbReference type="Gene3D" id="6.10.250.2350">
    <property type="match status" value="1"/>
</dbReference>
<dbReference type="HAMAP" id="MF_00362">
    <property type="entry name" value="Ribosomal_uL10"/>
    <property type="match status" value="1"/>
</dbReference>
<dbReference type="InterPro" id="IPR001790">
    <property type="entry name" value="Ribosomal_uL10"/>
</dbReference>
<dbReference type="InterPro" id="IPR043141">
    <property type="entry name" value="Ribosomal_uL10-like_sf"/>
</dbReference>
<dbReference type="InterPro" id="IPR022973">
    <property type="entry name" value="Ribosomal_uL10_bac"/>
</dbReference>
<dbReference type="InterPro" id="IPR047865">
    <property type="entry name" value="Ribosomal_uL10_bac_type"/>
</dbReference>
<dbReference type="InterPro" id="IPR002363">
    <property type="entry name" value="Ribosomal_uL10_CS_bac"/>
</dbReference>
<dbReference type="NCBIfam" id="NF000955">
    <property type="entry name" value="PRK00099.1-1"/>
    <property type="match status" value="1"/>
</dbReference>
<dbReference type="PANTHER" id="PTHR11560">
    <property type="entry name" value="39S RIBOSOMAL PROTEIN L10, MITOCHONDRIAL"/>
    <property type="match status" value="1"/>
</dbReference>
<dbReference type="Pfam" id="PF00466">
    <property type="entry name" value="Ribosomal_L10"/>
    <property type="match status" value="1"/>
</dbReference>
<dbReference type="SUPFAM" id="SSF160369">
    <property type="entry name" value="Ribosomal protein L10-like"/>
    <property type="match status" value="1"/>
</dbReference>
<dbReference type="PROSITE" id="PS01109">
    <property type="entry name" value="RIBOSOMAL_L10"/>
    <property type="match status" value="1"/>
</dbReference>
<evidence type="ECO:0000255" key="1">
    <source>
        <dbReference type="HAMAP-Rule" id="MF_00362"/>
    </source>
</evidence>
<evidence type="ECO:0000305" key="2"/>
<accession>Q1C1T9</accession>
<organism>
    <name type="scientific">Yersinia pestis bv. Antiqua (strain Antiqua)</name>
    <dbReference type="NCBI Taxonomy" id="360102"/>
    <lineage>
        <taxon>Bacteria</taxon>
        <taxon>Pseudomonadati</taxon>
        <taxon>Pseudomonadota</taxon>
        <taxon>Gammaproteobacteria</taxon>
        <taxon>Enterobacterales</taxon>
        <taxon>Yersiniaceae</taxon>
        <taxon>Yersinia</taxon>
    </lineage>
</organism>
<protein>
    <recommendedName>
        <fullName evidence="1">Large ribosomal subunit protein uL10</fullName>
    </recommendedName>
    <alternativeName>
        <fullName evidence="2">50S ribosomal protein L10</fullName>
    </alternativeName>
</protein>
<reference key="1">
    <citation type="journal article" date="2006" name="J. Bacteriol.">
        <title>Complete genome sequence of Yersinia pestis strains Antiqua and Nepal516: evidence of gene reduction in an emerging pathogen.</title>
        <authorList>
            <person name="Chain P.S.G."/>
            <person name="Hu P."/>
            <person name="Malfatti S.A."/>
            <person name="Radnedge L."/>
            <person name="Larimer F."/>
            <person name="Vergez L.M."/>
            <person name="Worsham P."/>
            <person name="Chu M.C."/>
            <person name="Andersen G.L."/>
        </authorList>
    </citation>
    <scope>NUCLEOTIDE SEQUENCE [LARGE SCALE GENOMIC DNA]</scope>
    <source>
        <strain>Antiqua</strain>
    </source>
</reference>
<gene>
    <name evidence="1" type="primary">rplJ</name>
    <name type="ordered locus">YPA_3621</name>
</gene>
<keyword id="KW-0687">Ribonucleoprotein</keyword>
<keyword id="KW-0689">Ribosomal protein</keyword>
<keyword id="KW-0694">RNA-binding</keyword>
<keyword id="KW-0699">rRNA-binding</keyword>
<name>RL10_YERPA</name>